<reference key="1">
    <citation type="journal article" date="2008" name="ISME J.">
        <title>Comparative genomics of two ecotypes of the marine planktonic copiotroph Alteromonas macleodii suggests alternative lifestyles associated with different kinds of particulate organic matter.</title>
        <authorList>
            <person name="Ivars-Martinez E."/>
            <person name="Martin-Cuadrado A.-B."/>
            <person name="D'Auria G."/>
            <person name="Mira A."/>
            <person name="Ferriera S."/>
            <person name="Johnson J."/>
            <person name="Friedman R."/>
            <person name="Rodriguez-Valera F."/>
        </authorList>
    </citation>
    <scope>NUCLEOTIDE SEQUENCE [LARGE SCALE GENOMIC DNA]</scope>
    <source>
        <strain>DSM 17117 / CIP 110805 / LMG 28347 / Deep ecotype</strain>
    </source>
</reference>
<proteinExistence type="inferred from homology"/>
<protein>
    <recommendedName>
        <fullName evidence="1">Ribosome maturation factor RimP</fullName>
    </recommendedName>
</protein>
<organism>
    <name type="scientific">Alteromonas mediterranea (strain DSM 17117 / CIP 110805 / LMG 28347 / Deep ecotype)</name>
    <dbReference type="NCBI Taxonomy" id="1774373"/>
    <lineage>
        <taxon>Bacteria</taxon>
        <taxon>Pseudomonadati</taxon>
        <taxon>Pseudomonadota</taxon>
        <taxon>Gammaproteobacteria</taxon>
        <taxon>Alteromonadales</taxon>
        <taxon>Alteromonadaceae</taxon>
        <taxon>Alteromonas/Salinimonas group</taxon>
        <taxon>Alteromonas</taxon>
    </lineage>
</organism>
<sequence length="152" mass="16892">MAKLEEKLTEMLEPGVEALGFELVGIEFVRAGKHSILRVFIDHENGITVDDCADVSHQVSAILDVEDPISTEYNLEVSSPGMDRPLFKEKHYIESVGEVVQVRLSMPMDDRRNFKGKVLACENGMVSIEVDGQQFQLAVANIEKGNVVPTFD</sequence>
<accession>B4RXT6</accession>
<accession>F2GAC6</accession>
<gene>
    <name evidence="1" type="primary">rimP</name>
    <name type="ordered locus">MADE_1008910</name>
</gene>
<dbReference type="EMBL" id="CP001103">
    <property type="protein sequence ID" value="AEA97920.1"/>
    <property type="molecule type" value="Genomic_DNA"/>
</dbReference>
<dbReference type="RefSeq" id="WP_012518251.1">
    <property type="nucleotide sequence ID" value="NC_011138.3"/>
</dbReference>
<dbReference type="SMR" id="B4RXT6"/>
<dbReference type="GeneID" id="56342190"/>
<dbReference type="KEGG" id="amc:MADE_1008910"/>
<dbReference type="HOGENOM" id="CLU_070525_1_1_6"/>
<dbReference type="Proteomes" id="UP000001870">
    <property type="component" value="Chromosome"/>
</dbReference>
<dbReference type="GO" id="GO:0005829">
    <property type="term" value="C:cytosol"/>
    <property type="evidence" value="ECO:0007669"/>
    <property type="project" value="TreeGrafter"/>
</dbReference>
<dbReference type="GO" id="GO:0000028">
    <property type="term" value="P:ribosomal small subunit assembly"/>
    <property type="evidence" value="ECO:0007669"/>
    <property type="project" value="TreeGrafter"/>
</dbReference>
<dbReference type="GO" id="GO:0006412">
    <property type="term" value="P:translation"/>
    <property type="evidence" value="ECO:0007669"/>
    <property type="project" value="TreeGrafter"/>
</dbReference>
<dbReference type="CDD" id="cd01734">
    <property type="entry name" value="YlxS_C"/>
    <property type="match status" value="1"/>
</dbReference>
<dbReference type="FunFam" id="3.30.300.70:FF:000001">
    <property type="entry name" value="Ribosome maturation factor RimP"/>
    <property type="match status" value="1"/>
</dbReference>
<dbReference type="Gene3D" id="2.30.30.180">
    <property type="entry name" value="Ribosome maturation factor RimP, C-terminal domain"/>
    <property type="match status" value="1"/>
</dbReference>
<dbReference type="Gene3D" id="3.30.300.70">
    <property type="entry name" value="RimP-like superfamily, N-terminal"/>
    <property type="match status" value="1"/>
</dbReference>
<dbReference type="HAMAP" id="MF_01077">
    <property type="entry name" value="RimP"/>
    <property type="match status" value="1"/>
</dbReference>
<dbReference type="InterPro" id="IPR003728">
    <property type="entry name" value="Ribosome_maturation_RimP"/>
</dbReference>
<dbReference type="InterPro" id="IPR028998">
    <property type="entry name" value="RimP_C"/>
</dbReference>
<dbReference type="InterPro" id="IPR036847">
    <property type="entry name" value="RimP_C_sf"/>
</dbReference>
<dbReference type="InterPro" id="IPR028989">
    <property type="entry name" value="RimP_N"/>
</dbReference>
<dbReference type="InterPro" id="IPR035956">
    <property type="entry name" value="RimP_N_sf"/>
</dbReference>
<dbReference type="NCBIfam" id="NF000927">
    <property type="entry name" value="PRK00092.1-1"/>
    <property type="match status" value="1"/>
</dbReference>
<dbReference type="PANTHER" id="PTHR33867">
    <property type="entry name" value="RIBOSOME MATURATION FACTOR RIMP"/>
    <property type="match status" value="1"/>
</dbReference>
<dbReference type="PANTHER" id="PTHR33867:SF1">
    <property type="entry name" value="RIBOSOME MATURATION FACTOR RIMP"/>
    <property type="match status" value="1"/>
</dbReference>
<dbReference type="Pfam" id="PF17384">
    <property type="entry name" value="DUF150_C"/>
    <property type="match status" value="1"/>
</dbReference>
<dbReference type="Pfam" id="PF02576">
    <property type="entry name" value="RimP_N"/>
    <property type="match status" value="1"/>
</dbReference>
<dbReference type="SUPFAM" id="SSF74942">
    <property type="entry name" value="YhbC-like, C-terminal domain"/>
    <property type="match status" value="1"/>
</dbReference>
<dbReference type="SUPFAM" id="SSF75420">
    <property type="entry name" value="YhbC-like, N-terminal domain"/>
    <property type="match status" value="1"/>
</dbReference>
<comment type="function">
    <text evidence="1">Required for maturation of 30S ribosomal subunits.</text>
</comment>
<comment type="subcellular location">
    <subcellularLocation>
        <location evidence="1">Cytoplasm</location>
    </subcellularLocation>
</comment>
<comment type="similarity">
    <text evidence="1">Belongs to the RimP family.</text>
</comment>
<evidence type="ECO:0000255" key="1">
    <source>
        <dbReference type="HAMAP-Rule" id="MF_01077"/>
    </source>
</evidence>
<name>RIMP_ALTMD</name>
<keyword id="KW-0963">Cytoplasm</keyword>
<keyword id="KW-0690">Ribosome biogenesis</keyword>
<feature type="chain" id="PRO_0000384598" description="Ribosome maturation factor RimP">
    <location>
        <begin position="1"/>
        <end position="152"/>
    </location>
</feature>